<gene>
    <name evidence="1" type="primary">petG</name>
    <name type="ordered locus">Ava_4019</name>
</gene>
<evidence type="ECO:0000255" key="1">
    <source>
        <dbReference type="HAMAP-Rule" id="MF_00432"/>
    </source>
</evidence>
<reference key="1">
    <citation type="submission" date="2000-02" db="EMBL/GenBank/DDBJ databases">
        <title>b6f complex of Anabaena variabilis.</title>
        <authorList>
            <person name="Arnold M."/>
        </authorList>
    </citation>
    <scope>NUCLEOTIDE SEQUENCE [GENOMIC DNA]</scope>
    <source>
        <strain>FD</strain>
    </source>
</reference>
<reference key="2">
    <citation type="journal article" date="2014" name="Stand. Genomic Sci.">
        <title>Complete genome sequence of Anabaena variabilis ATCC 29413.</title>
        <authorList>
            <person name="Thiel T."/>
            <person name="Pratte B.S."/>
            <person name="Zhong J."/>
            <person name="Goodwin L."/>
            <person name="Copeland A."/>
            <person name="Lucas S."/>
            <person name="Han C."/>
            <person name="Pitluck S."/>
            <person name="Land M.L."/>
            <person name="Kyrpides N.C."/>
            <person name="Woyke T."/>
        </authorList>
    </citation>
    <scope>NUCLEOTIDE SEQUENCE [LARGE SCALE GENOMIC DNA]</scope>
    <source>
        <strain>ATCC 29413 / PCC 7937</strain>
    </source>
</reference>
<organism>
    <name type="scientific">Trichormus variabilis (strain ATCC 29413 / PCC 7937)</name>
    <name type="common">Anabaena variabilis</name>
    <dbReference type="NCBI Taxonomy" id="240292"/>
    <lineage>
        <taxon>Bacteria</taxon>
        <taxon>Bacillati</taxon>
        <taxon>Cyanobacteriota</taxon>
        <taxon>Cyanophyceae</taxon>
        <taxon>Nostocales</taxon>
        <taxon>Nostocaceae</taxon>
        <taxon>Trichormus</taxon>
    </lineage>
</organism>
<sequence>MVEPLLSGIVLGLIVVTLSGLFYAAYKQYKRPNELGG</sequence>
<proteinExistence type="inferred from homology"/>
<accession>Q3M5W2</accession>
<accession>Q9L3P7</accession>
<accession>Q9ZB69</accession>
<name>PETG_TRIV2</name>
<feature type="chain" id="PRO_0000216409" description="Cytochrome b6-f complex subunit 5">
    <location>
        <begin position="1"/>
        <end position="37"/>
    </location>
</feature>
<feature type="transmembrane region" description="Helical" evidence="1">
    <location>
        <begin position="5"/>
        <end position="25"/>
    </location>
</feature>
<dbReference type="EMBL" id="AJ271820">
    <property type="protein sequence ID" value="CAB72246.1"/>
    <property type="molecule type" value="Genomic_DNA"/>
</dbReference>
<dbReference type="EMBL" id="CP000117">
    <property type="protein sequence ID" value="ABA23624.1"/>
    <property type="molecule type" value="Genomic_DNA"/>
</dbReference>
<dbReference type="SMR" id="Q3M5W2"/>
<dbReference type="STRING" id="240292.Ava_4019"/>
<dbReference type="KEGG" id="ava:Ava_4019"/>
<dbReference type="eggNOG" id="ENOG5033BE9">
    <property type="taxonomic scope" value="Bacteria"/>
</dbReference>
<dbReference type="HOGENOM" id="CLU_216962_0_0_3"/>
<dbReference type="Proteomes" id="UP000002533">
    <property type="component" value="Chromosome"/>
</dbReference>
<dbReference type="GO" id="GO:0009512">
    <property type="term" value="C:cytochrome b6f complex"/>
    <property type="evidence" value="ECO:0007669"/>
    <property type="project" value="InterPro"/>
</dbReference>
<dbReference type="GO" id="GO:0031676">
    <property type="term" value="C:plasma membrane-derived thylakoid membrane"/>
    <property type="evidence" value="ECO:0007669"/>
    <property type="project" value="UniProtKB-SubCell"/>
</dbReference>
<dbReference type="GO" id="GO:0045158">
    <property type="term" value="F:electron transporter, transferring electrons within cytochrome b6/f complex of photosystem II activity"/>
    <property type="evidence" value="ECO:0007669"/>
    <property type="project" value="UniProtKB-UniRule"/>
</dbReference>
<dbReference type="GO" id="GO:0017004">
    <property type="term" value="P:cytochrome complex assembly"/>
    <property type="evidence" value="ECO:0007669"/>
    <property type="project" value="UniProtKB-UniRule"/>
</dbReference>
<dbReference type="GO" id="GO:0015979">
    <property type="term" value="P:photosynthesis"/>
    <property type="evidence" value="ECO:0007669"/>
    <property type="project" value="UniProtKB-KW"/>
</dbReference>
<dbReference type="HAMAP" id="MF_00432">
    <property type="entry name" value="Cytb6_f_PetG"/>
    <property type="match status" value="1"/>
</dbReference>
<dbReference type="InterPro" id="IPR003683">
    <property type="entry name" value="Cyt_6/f_cplx_su5"/>
</dbReference>
<dbReference type="InterPro" id="IPR036099">
    <property type="entry name" value="Cyt_6/f_cplx_su5_sf"/>
</dbReference>
<dbReference type="NCBIfam" id="NF001907">
    <property type="entry name" value="PRK00665.1"/>
    <property type="match status" value="1"/>
</dbReference>
<dbReference type="Pfam" id="PF02529">
    <property type="entry name" value="PetG"/>
    <property type="match status" value="1"/>
</dbReference>
<dbReference type="PIRSF" id="PIRSF000034">
    <property type="entry name" value="Cyt_b6-f_V"/>
    <property type="match status" value="1"/>
</dbReference>
<dbReference type="SUPFAM" id="SSF103446">
    <property type="entry name" value="PetG subunit of the cytochrome b6f complex"/>
    <property type="match status" value="1"/>
</dbReference>
<protein>
    <recommendedName>
        <fullName evidence="1">Cytochrome b6-f complex subunit 5</fullName>
    </recommendedName>
    <alternativeName>
        <fullName evidence="1">Cytochrome b6-f complex subunit PetG</fullName>
    </alternativeName>
    <alternativeName>
        <fullName evidence="1">Cytochrome b6-f complex subunit V</fullName>
    </alternativeName>
</protein>
<keyword id="KW-0249">Electron transport</keyword>
<keyword id="KW-0472">Membrane</keyword>
<keyword id="KW-0602">Photosynthesis</keyword>
<keyword id="KW-0793">Thylakoid</keyword>
<keyword id="KW-0812">Transmembrane</keyword>
<keyword id="KW-1133">Transmembrane helix</keyword>
<keyword id="KW-0813">Transport</keyword>
<comment type="function">
    <text evidence="1">Component of the cytochrome b6-f complex, which mediates electron transfer between photosystem II (PSII) and photosystem I (PSI), cyclic electron flow around PSI, and state transitions. PetG is required for either the stability or assembly of the cytochrome b6-f complex.</text>
</comment>
<comment type="subunit">
    <text evidence="1">The 4 large subunits of the cytochrome b6-f complex are cytochrome b6, subunit IV (17 kDa polypeptide, PetD), cytochrome f and the Rieske protein, while the 4 small subunits are PetG, PetL, PetM and PetN. The complex functions as a dimer.</text>
</comment>
<comment type="subcellular location">
    <subcellularLocation>
        <location evidence="1">Cellular thylakoid membrane</location>
        <topology evidence="1">Single-pass membrane protein</topology>
    </subcellularLocation>
</comment>
<comment type="similarity">
    <text evidence="1">Belongs to the PetG family.</text>
</comment>